<gene>
    <name evidence="1" type="primary">ruvC</name>
    <name type="ordered locus">A2cp1_1009</name>
</gene>
<keyword id="KW-0963">Cytoplasm</keyword>
<keyword id="KW-0227">DNA damage</keyword>
<keyword id="KW-0233">DNA recombination</keyword>
<keyword id="KW-0234">DNA repair</keyword>
<keyword id="KW-0238">DNA-binding</keyword>
<keyword id="KW-0255">Endonuclease</keyword>
<keyword id="KW-0378">Hydrolase</keyword>
<keyword id="KW-0460">Magnesium</keyword>
<keyword id="KW-0479">Metal-binding</keyword>
<keyword id="KW-0540">Nuclease</keyword>
<feature type="chain" id="PRO_1000195232" description="Crossover junction endodeoxyribonuclease RuvC">
    <location>
        <begin position="1"/>
        <end position="185"/>
    </location>
</feature>
<feature type="active site" evidence="1">
    <location>
        <position position="7"/>
    </location>
</feature>
<feature type="active site" evidence="1">
    <location>
        <position position="66"/>
    </location>
</feature>
<feature type="active site" evidence="1">
    <location>
        <position position="137"/>
    </location>
</feature>
<feature type="binding site" evidence="1">
    <location>
        <position position="7"/>
    </location>
    <ligand>
        <name>Mg(2+)</name>
        <dbReference type="ChEBI" id="CHEBI:18420"/>
        <label>1</label>
    </ligand>
</feature>
<feature type="binding site" evidence="1">
    <location>
        <position position="66"/>
    </location>
    <ligand>
        <name>Mg(2+)</name>
        <dbReference type="ChEBI" id="CHEBI:18420"/>
        <label>2</label>
    </ligand>
</feature>
<feature type="binding site" evidence="1">
    <location>
        <position position="137"/>
    </location>
    <ligand>
        <name>Mg(2+)</name>
        <dbReference type="ChEBI" id="CHEBI:18420"/>
        <label>1</label>
    </ligand>
</feature>
<name>RUVC_ANAD2</name>
<sequence>MIVLGIDPGSRRCGYGVVAREGARLTVVESGVLVPGDLPMAQRLGRILDGLDALIARARPLEASVESVFSGASPRSALVLGQARGVALAAAARAGLPVFEYAPSEVKLAFTGNGRAGKDQMLRTARMLLGAAPGLSDEADALAIAVCHLARRAFAVPAAGAGRAAAARAAAARLRPSRRDHRGTP</sequence>
<protein>
    <recommendedName>
        <fullName evidence="1">Crossover junction endodeoxyribonuclease RuvC</fullName>
        <ecNumber evidence="1">3.1.21.10</ecNumber>
    </recommendedName>
    <alternativeName>
        <fullName evidence="1">Holliday junction nuclease RuvC</fullName>
    </alternativeName>
    <alternativeName>
        <fullName evidence="1">Holliday junction resolvase RuvC</fullName>
    </alternativeName>
</protein>
<reference key="1">
    <citation type="submission" date="2009-01" db="EMBL/GenBank/DDBJ databases">
        <title>Complete sequence of Anaeromyxobacter dehalogenans 2CP-1.</title>
        <authorList>
            <person name="Lucas S."/>
            <person name="Copeland A."/>
            <person name="Lapidus A."/>
            <person name="Glavina del Rio T."/>
            <person name="Dalin E."/>
            <person name="Tice H."/>
            <person name="Bruce D."/>
            <person name="Goodwin L."/>
            <person name="Pitluck S."/>
            <person name="Saunders E."/>
            <person name="Brettin T."/>
            <person name="Detter J.C."/>
            <person name="Han C."/>
            <person name="Larimer F."/>
            <person name="Land M."/>
            <person name="Hauser L."/>
            <person name="Kyrpides N."/>
            <person name="Ovchinnikova G."/>
            <person name="Beliaev A.S."/>
            <person name="Richardson P."/>
        </authorList>
    </citation>
    <scope>NUCLEOTIDE SEQUENCE [LARGE SCALE GENOMIC DNA]</scope>
    <source>
        <strain>2CP-1 / ATCC BAA-258</strain>
    </source>
</reference>
<proteinExistence type="inferred from homology"/>
<evidence type="ECO:0000255" key="1">
    <source>
        <dbReference type="HAMAP-Rule" id="MF_00034"/>
    </source>
</evidence>
<organism>
    <name type="scientific">Anaeromyxobacter dehalogenans (strain 2CP-1 / ATCC BAA-258)</name>
    <dbReference type="NCBI Taxonomy" id="455488"/>
    <lineage>
        <taxon>Bacteria</taxon>
        <taxon>Pseudomonadati</taxon>
        <taxon>Myxococcota</taxon>
        <taxon>Myxococcia</taxon>
        <taxon>Myxococcales</taxon>
        <taxon>Cystobacterineae</taxon>
        <taxon>Anaeromyxobacteraceae</taxon>
        <taxon>Anaeromyxobacter</taxon>
    </lineage>
</organism>
<comment type="function">
    <text evidence="1">The RuvA-RuvB-RuvC complex processes Holliday junction (HJ) DNA during genetic recombination and DNA repair. Endonuclease that resolves HJ intermediates. Cleaves cruciform DNA by making single-stranded nicks across the HJ at symmetrical positions within the homologous arms, yielding a 5'-phosphate and a 3'-hydroxyl group; requires a central core of homology in the junction. The consensus cleavage sequence is 5'-(A/T)TT(C/G)-3'. Cleavage occurs on the 3'-side of the TT dinucleotide at the point of strand exchange. HJ branch migration catalyzed by RuvA-RuvB allows RuvC to scan DNA until it finds its consensus sequence, where it cleaves and resolves the cruciform DNA.</text>
</comment>
<comment type="catalytic activity">
    <reaction evidence="1">
        <text>Endonucleolytic cleavage at a junction such as a reciprocal single-stranded crossover between two homologous DNA duplexes (Holliday junction).</text>
        <dbReference type="EC" id="3.1.21.10"/>
    </reaction>
</comment>
<comment type="cofactor">
    <cofactor evidence="1">
        <name>Mg(2+)</name>
        <dbReference type="ChEBI" id="CHEBI:18420"/>
    </cofactor>
    <text evidence="1">Binds 2 Mg(2+) ion per subunit.</text>
</comment>
<comment type="subunit">
    <text evidence="1">Homodimer which binds Holliday junction (HJ) DNA. The HJ becomes 2-fold symmetrical on binding to RuvC with unstacked arms; it has a different conformation from HJ DNA in complex with RuvA. In the full resolvosome a probable DNA-RuvA(4)-RuvB(12)-RuvC(2) complex forms which resolves the HJ.</text>
</comment>
<comment type="subcellular location">
    <subcellularLocation>
        <location evidence="1">Cytoplasm</location>
    </subcellularLocation>
</comment>
<comment type="similarity">
    <text evidence="1">Belongs to the RuvC family.</text>
</comment>
<accession>B8JF03</accession>
<dbReference type="EC" id="3.1.21.10" evidence="1"/>
<dbReference type="EMBL" id="CP001359">
    <property type="protein sequence ID" value="ACL64360.1"/>
    <property type="molecule type" value="Genomic_DNA"/>
</dbReference>
<dbReference type="RefSeq" id="WP_012632357.1">
    <property type="nucleotide sequence ID" value="NC_011891.1"/>
</dbReference>
<dbReference type="SMR" id="B8JF03"/>
<dbReference type="KEGG" id="acp:A2cp1_1009"/>
<dbReference type="HOGENOM" id="CLU_091257_2_1_7"/>
<dbReference type="Proteomes" id="UP000007089">
    <property type="component" value="Chromosome"/>
</dbReference>
<dbReference type="GO" id="GO:0005737">
    <property type="term" value="C:cytoplasm"/>
    <property type="evidence" value="ECO:0007669"/>
    <property type="project" value="UniProtKB-SubCell"/>
</dbReference>
<dbReference type="GO" id="GO:0048476">
    <property type="term" value="C:Holliday junction resolvase complex"/>
    <property type="evidence" value="ECO:0007669"/>
    <property type="project" value="UniProtKB-UniRule"/>
</dbReference>
<dbReference type="GO" id="GO:0008821">
    <property type="term" value="F:crossover junction DNA endonuclease activity"/>
    <property type="evidence" value="ECO:0007669"/>
    <property type="project" value="UniProtKB-UniRule"/>
</dbReference>
<dbReference type="GO" id="GO:0003677">
    <property type="term" value="F:DNA binding"/>
    <property type="evidence" value="ECO:0007669"/>
    <property type="project" value="UniProtKB-KW"/>
</dbReference>
<dbReference type="GO" id="GO:0000287">
    <property type="term" value="F:magnesium ion binding"/>
    <property type="evidence" value="ECO:0007669"/>
    <property type="project" value="UniProtKB-UniRule"/>
</dbReference>
<dbReference type="GO" id="GO:0006310">
    <property type="term" value="P:DNA recombination"/>
    <property type="evidence" value="ECO:0007669"/>
    <property type="project" value="UniProtKB-UniRule"/>
</dbReference>
<dbReference type="GO" id="GO:0006281">
    <property type="term" value="P:DNA repair"/>
    <property type="evidence" value="ECO:0007669"/>
    <property type="project" value="UniProtKB-UniRule"/>
</dbReference>
<dbReference type="CDD" id="cd16962">
    <property type="entry name" value="RuvC"/>
    <property type="match status" value="1"/>
</dbReference>
<dbReference type="FunFam" id="3.30.420.10:FF:000002">
    <property type="entry name" value="Crossover junction endodeoxyribonuclease RuvC"/>
    <property type="match status" value="1"/>
</dbReference>
<dbReference type="Gene3D" id="3.30.420.10">
    <property type="entry name" value="Ribonuclease H-like superfamily/Ribonuclease H"/>
    <property type="match status" value="1"/>
</dbReference>
<dbReference type="HAMAP" id="MF_00034">
    <property type="entry name" value="RuvC"/>
    <property type="match status" value="1"/>
</dbReference>
<dbReference type="InterPro" id="IPR012337">
    <property type="entry name" value="RNaseH-like_sf"/>
</dbReference>
<dbReference type="InterPro" id="IPR036397">
    <property type="entry name" value="RNaseH_sf"/>
</dbReference>
<dbReference type="InterPro" id="IPR002176">
    <property type="entry name" value="X-over_junc_endoDNase_RuvC"/>
</dbReference>
<dbReference type="NCBIfam" id="TIGR00228">
    <property type="entry name" value="ruvC"/>
    <property type="match status" value="1"/>
</dbReference>
<dbReference type="PANTHER" id="PTHR30194">
    <property type="entry name" value="CROSSOVER JUNCTION ENDODEOXYRIBONUCLEASE RUVC"/>
    <property type="match status" value="1"/>
</dbReference>
<dbReference type="PANTHER" id="PTHR30194:SF3">
    <property type="entry name" value="CROSSOVER JUNCTION ENDODEOXYRIBONUCLEASE RUVC"/>
    <property type="match status" value="1"/>
</dbReference>
<dbReference type="Pfam" id="PF02075">
    <property type="entry name" value="RuvC"/>
    <property type="match status" value="1"/>
</dbReference>
<dbReference type="PRINTS" id="PR00696">
    <property type="entry name" value="RSOLVASERUVC"/>
</dbReference>
<dbReference type="SUPFAM" id="SSF53098">
    <property type="entry name" value="Ribonuclease H-like"/>
    <property type="match status" value="1"/>
</dbReference>